<dbReference type="EMBL" id="AC245427">
    <property type="status" value="NOT_ANNOTATED_CDS"/>
    <property type="molecule type" value="Genomic_DNA"/>
</dbReference>
<dbReference type="SMR" id="A0A0K0K1B3"/>
<dbReference type="FunCoup" id="A0A0K0K1B3">
    <property type="interactions" value="427"/>
</dbReference>
<dbReference type="IMGT_GENE-DB" id="TRBV30"/>
<dbReference type="GlyCosmos" id="A0A0K0K1B3">
    <property type="glycosylation" value="1 site, No reported glycans"/>
</dbReference>
<dbReference type="GlyGen" id="A0A0K0K1B3">
    <property type="glycosylation" value="1 site"/>
</dbReference>
<dbReference type="BioMuta" id="TRBV30"/>
<dbReference type="Ensembl" id="ENST00000417977.2">
    <property type="protein sequence ID" value="ENSP00000397118.2"/>
    <property type="gene ID" value="ENSG00000237254.2"/>
</dbReference>
<dbReference type="Ensembl" id="ENST00000631690.1">
    <property type="protein sequence ID" value="ENSP00000487814.1"/>
    <property type="gene ID" value="ENSG00000282297.1"/>
</dbReference>
<dbReference type="UCSC" id="uc022aob.3">
    <property type="organism name" value="human"/>
</dbReference>
<dbReference type="AGR" id="HGNC:12214"/>
<dbReference type="GeneCards" id="TRBV30"/>
<dbReference type="HGNC" id="HGNC:12214">
    <property type="gene designation" value="TRBV30"/>
</dbReference>
<dbReference type="HPA" id="ENSG00000237254">
    <property type="expression patterns" value="Tissue enriched (lymphoid)"/>
</dbReference>
<dbReference type="neXtProt" id="NX_A0A0K0K1B3"/>
<dbReference type="OpenTargets" id="ENSG00000237254"/>
<dbReference type="VEuPathDB" id="HostDB:ENSG00000237254"/>
<dbReference type="GeneTree" id="ENSGT00440000034680"/>
<dbReference type="InParanoid" id="A0A0K0K1B3"/>
<dbReference type="OMA" id="HQWPATK"/>
<dbReference type="OrthoDB" id="9803478at2759"/>
<dbReference type="PAN-GO" id="A0A0K0K1B3">
    <property type="GO annotations" value="2 GO annotations based on evolutionary models"/>
</dbReference>
<dbReference type="ChiTaRS" id="TRBV30">
    <property type="organism name" value="human"/>
</dbReference>
<dbReference type="Pharos" id="A0A0K0K1B3">
    <property type="development level" value="Tdark"/>
</dbReference>
<dbReference type="PRO" id="PR:A0A0K0K1B3"/>
<dbReference type="Proteomes" id="UP000005640">
    <property type="component" value="Chromosome 7"/>
</dbReference>
<dbReference type="RNAct" id="A0A0K0K1B3">
    <property type="molecule type" value="protein"/>
</dbReference>
<dbReference type="Bgee" id="ENSG00000237254">
    <property type="expression patterns" value="Expressed in primordial germ cell in gonad and 70 other cell types or tissues"/>
</dbReference>
<dbReference type="GO" id="GO:0005886">
    <property type="term" value="C:plasma membrane"/>
    <property type="evidence" value="ECO:0000318"/>
    <property type="project" value="GO_Central"/>
</dbReference>
<dbReference type="GO" id="GO:0042101">
    <property type="term" value="C:T cell receptor complex"/>
    <property type="evidence" value="ECO:0007669"/>
    <property type="project" value="UniProtKB-KW"/>
</dbReference>
<dbReference type="GO" id="GO:0002250">
    <property type="term" value="P:adaptive immune response"/>
    <property type="evidence" value="ECO:0007669"/>
    <property type="project" value="UniProtKB-KW"/>
</dbReference>
<dbReference type="GO" id="GO:0007166">
    <property type="term" value="P:cell surface receptor signaling pathway"/>
    <property type="evidence" value="ECO:0000318"/>
    <property type="project" value="GO_Central"/>
</dbReference>
<dbReference type="CDD" id="cd00099">
    <property type="entry name" value="IgV"/>
    <property type="match status" value="1"/>
</dbReference>
<dbReference type="Gene3D" id="2.60.40.10">
    <property type="entry name" value="Immunoglobulins"/>
    <property type="match status" value="1"/>
</dbReference>
<dbReference type="InterPro" id="IPR007110">
    <property type="entry name" value="Ig-like_dom"/>
</dbReference>
<dbReference type="InterPro" id="IPR036179">
    <property type="entry name" value="Ig-like_dom_sf"/>
</dbReference>
<dbReference type="InterPro" id="IPR013783">
    <property type="entry name" value="Ig-like_fold"/>
</dbReference>
<dbReference type="InterPro" id="IPR013106">
    <property type="entry name" value="Ig_V-set"/>
</dbReference>
<dbReference type="InterPro" id="IPR050413">
    <property type="entry name" value="TCR_beta_variable"/>
</dbReference>
<dbReference type="PANTHER" id="PTHR23268:SF31">
    <property type="entry name" value="T CELL RECEPTOR BETA VARIABLE 30"/>
    <property type="match status" value="1"/>
</dbReference>
<dbReference type="PANTHER" id="PTHR23268">
    <property type="entry name" value="T-CELL RECEPTOR BETA CHAIN"/>
    <property type="match status" value="1"/>
</dbReference>
<dbReference type="Pfam" id="PF07686">
    <property type="entry name" value="V-set"/>
    <property type="match status" value="1"/>
</dbReference>
<dbReference type="SMART" id="SM00406">
    <property type="entry name" value="IGv"/>
    <property type="match status" value="1"/>
</dbReference>
<dbReference type="SUPFAM" id="SSF48726">
    <property type="entry name" value="Immunoglobulin"/>
    <property type="match status" value="1"/>
</dbReference>
<dbReference type="PROSITE" id="PS50835">
    <property type="entry name" value="IG_LIKE"/>
    <property type="match status" value="1"/>
</dbReference>
<evidence type="ECO:0000255" key="1"/>
<evidence type="ECO:0000255" key="2">
    <source>
        <dbReference type="PROSITE-ProRule" id="PRU00114"/>
    </source>
</evidence>
<evidence type="ECO:0000255" key="3">
    <source>
        <dbReference type="PROSITE-ProRule" id="PRU00498"/>
    </source>
</evidence>
<evidence type="ECO:0000303" key="4">
    <source>
    </source>
</evidence>
<evidence type="ECO:0000303" key="5">
    <source>
    </source>
</evidence>
<evidence type="ECO:0000303" key="6">
    <source>
    </source>
</evidence>
<evidence type="ECO:0000303" key="7">
    <source>
    </source>
</evidence>
<evidence type="ECO:0000303" key="8">
    <source>
    </source>
</evidence>
<evidence type="ECO:0000303" key="9">
    <source ref="2"/>
</evidence>
<evidence type="ECO:0000305" key="10"/>
<comment type="function">
    <text evidence="4 6 7 8">V region of the variable domain of T cell receptor (TR) beta chain that participates in the antigen recognition (PubMed:24600447). Alpha-beta T cell receptors are antigen specific receptors which are essential to the immune response and are present on the cell surface of T lymphocytes. Recognize peptide-major histocompatibility (MH) (pMH) complexes that are displayed by antigen presenting cells (APC), a prerequisite for efficient T cell adaptive immunity against pathogens (PubMed:25493333). Binding of alpha-beta TR to pMH complex initiates TR-CD3 clustering on the cell surface and intracellular activation of LCK that phosphorylates the ITAM motifs of CD3G, CD3D, CD3E and CD247 enabling the recruitment of ZAP70. In turn ZAP70 phosphorylates LAT, which recruits numerous signaling molecules to form the LAT signalosome. The LAT signalosome propagates signal branching to three major signaling pathways, the calcium, the mitogen-activated protein kinase (MAPK) kinase and the nuclear factor NF-kappa-B (NF-kB) pathways, leading to the mobilization of transcription factors that are critical for gene expression and essential for T cell growth and differentiation (PubMed:23524462). The T cell repertoire is generated in the thymus, by V-(D)-J rearrangement. This repertoire is then shaped by intrathymic selection events to generate a peripheral T cell pool of self-MH restricted, non-autoaggressive T cells. Post-thymic interaction of alpha-beta TR with the pMH complexes shapes TR structural and functional avidity (PubMed:15040585).</text>
</comment>
<comment type="subunit">
    <text evidence="5">Alpha-beta TR is a heterodimer composed of an alpha and beta chain; disulfide-linked. The alpha-beta TR is associated with the transmembrane signaling CD3 coreceptor proteins to form the TR-CD3 (TcR or TCR). The assembly of alpha-beta TR heterodimers with CD3 occurs in the endoplasmic reticulum where a single alpha-beta TR heterodimer associates with one CD3D-CD3E heterodimer, one CD3G-CD3E heterodimer and one CD247 homodimer forming a stable octameric structure. CD3D-CD3E and CD3G-CD3E heterodimers preferentially associate with TR alpha and TR beta chains, respectively. The association of the CD247 homodimer is the last step of TcR assembly in the endoplasmic reticulum and is required for transport to the cell surface.</text>
</comment>
<comment type="subcellular location">
    <subcellularLocation>
        <location evidence="5">Cell membrane</location>
    </subcellularLocation>
</comment>
<comment type="polymorphism">
    <text evidence="10">There are several alleles. The sequence shown is that of IMGT allele TRBV30*01.</text>
</comment>
<keyword id="KW-1064">Adaptive immunity</keyword>
<keyword id="KW-1003">Cell membrane</keyword>
<keyword id="KW-1015">Disulfide bond</keyword>
<keyword id="KW-0325">Glycoprotein</keyword>
<keyword id="KW-0391">Immunity</keyword>
<keyword id="KW-0393">Immunoglobulin domain</keyword>
<keyword id="KW-0472">Membrane</keyword>
<keyword id="KW-0675">Receptor</keyword>
<keyword id="KW-1185">Reference proteome</keyword>
<keyword id="KW-0732">Signal</keyword>
<keyword id="KW-1279">T cell receptor</keyword>
<feature type="signal peptide" evidence="1">
    <location>
        <begin position="1"/>
        <end position="18"/>
    </location>
</feature>
<feature type="chain" id="PRO_5014517111" description="T cell receptor beta variable 30" evidence="1">
    <location>
        <begin position="19"/>
        <end position="111"/>
    </location>
</feature>
<feature type="domain" description="Ig-like" evidence="2">
    <location>
        <begin position="19"/>
        <end position="111" status="greater than"/>
    </location>
</feature>
<feature type="glycosylation site" description="N-linked (GlcNAc...) asparagine" evidence="3">
    <location>
        <position position="80"/>
    </location>
</feature>
<feature type="disulfide bond" evidence="2">
    <location>
        <begin position="40"/>
        <end position="108"/>
    </location>
</feature>
<feature type="non-terminal residue">
    <location>
        <position position="111"/>
    </location>
</feature>
<gene>
    <name evidence="9" type="primary">TRBV30</name>
</gene>
<reference key="1">
    <citation type="journal article" date="2003" name="Nature">
        <title>The DNA sequence of human chromosome 7.</title>
        <authorList>
            <person name="Hillier L.W."/>
            <person name="Fulton R.S."/>
            <person name="Fulton L.A."/>
            <person name="Graves T.A."/>
            <person name="Pepin K.H."/>
            <person name="Wagner-McPherson C."/>
            <person name="Layman D."/>
            <person name="Maas J."/>
            <person name="Jaeger S."/>
            <person name="Walker R."/>
            <person name="Wylie K."/>
            <person name="Sekhon M."/>
            <person name="Becker M.C."/>
            <person name="O'Laughlin M.D."/>
            <person name="Schaller M.E."/>
            <person name="Fewell G.A."/>
            <person name="Delehaunty K.D."/>
            <person name="Miner T.L."/>
            <person name="Nash W.E."/>
            <person name="Cordes M."/>
            <person name="Du H."/>
            <person name="Sun H."/>
            <person name="Edwards J."/>
            <person name="Bradshaw-Cordum H."/>
            <person name="Ali J."/>
            <person name="Andrews S."/>
            <person name="Isak A."/>
            <person name="Vanbrunt A."/>
            <person name="Nguyen C."/>
            <person name="Du F."/>
            <person name="Lamar B."/>
            <person name="Courtney L."/>
            <person name="Kalicki J."/>
            <person name="Ozersky P."/>
            <person name="Bielicki L."/>
            <person name="Scott K."/>
            <person name="Holmes A."/>
            <person name="Harkins R."/>
            <person name="Harris A."/>
            <person name="Strong C.M."/>
            <person name="Hou S."/>
            <person name="Tomlinson C."/>
            <person name="Dauphin-Kohlberg S."/>
            <person name="Kozlowicz-Reilly A."/>
            <person name="Leonard S."/>
            <person name="Rohlfing T."/>
            <person name="Rock S.M."/>
            <person name="Tin-Wollam A.-M."/>
            <person name="Abbott A."/>
            <person name="Minx P."/>
            <person name="Maupin R."/>
            <person name="Strowmatt C."/>
            <person name="Latreille P."/>
            <person name="Miller N."/>
            <person name="Johnson D."/>
            <person name="Murray J."/>
            <person name="Woessner J.P."/>
            <person name="Wendl M.C."/>
            <person name="Yang S.-P."/>
            <person name="Schultz B.R."/>
            <person name="Wallis J.W."/>
            <person name="Spieth J."/>
            <person name="Bieri T.A."/>
            <person name="Nelson J.O."/>
            <person name="Berkowicz N."/>
            <person name="Wohldmann P.E."/>
            <person name="Cook L.L."/>
            <person name="Hickenbotham M.T."/>
            <person name="Eldred J."/>
            <person name="Williams D."/>
            <person name="Bedell J.A."/>
            <person name="Mardis E.R."/>
            <person name="Clifton S.W."/>
            <person name="Chissoe S.L."/>
            <person name="Marra M.A."/>
            <person name="Raymond C."/>
            <person name="Haugen E."/>
            <person name="Gillett W."/>
            <person name="Zhou Y."/>
            <person name="James R."/>
            <person name="Phelps K."/>
            <person name="Iadanoto S."/>
            <person name="Bubb K."/>
            <person name="Simms E."/>
            <person name="Levy R."/>
            <person name="Clendenning J."/>
            <person name="Kaul R."/>
            <person name="Kent W.J."/>
            <person name="Furey T.S."/>
            <person name="Baertsch R.A."/>
            <person name="Brent M.R."/>
            <person name="Keibler E."/>
            <person name="Flicek P."/>
            <person name="Bork P."/>
            <person name="Suyama M."/>
            <person name="Bailey J.A."/>
            <person name="Portnoy M.E."/>
            <person name="Torrents D."/>
            <person name="Chinwalla A.T."/>
            <person name="Gish W.R."/>
            <person name="Eddy S.R."/>
            <person name="McPherson J.D."/>
            <person name="Olson M.V."/>
            <person name="Eichler E.E."/>
            <person name="Green E.D."/>
            <person name="Waterston R.H."/>
            <person name="Wilson R.K."/>
        </authorList>
    </citation>
    <scope>NUCLEOTIDE SEQUENCE [LARGE SCALE GENOMIC DNA] (IMGT ALLELE TRBV30*01)</scope>
</reference>
<reference key="2">
    <citation type="book" date="2001" name="The T Cell Receptor FactsBook.">
        <title>The T Cell Receptor FactsBook.</title>
        <editorList>
            <person name="Lefranc M.P."/>
            <person name="Lefranc G."/>
        </editorList>
        <authorList>
            <person name="Lefranc M.P."/>
            <person name="Lefranc G."/>
        </authorList>
    </citation>
    <scope>NOMENCLATURE</scope>
</reference>
<reference key="3">
    <citation type="journal article" date="2004" name="Nat. Rev. Immunol.">
        <title>The many important facets of T-cell repertoire diversity.</title>
        <authorList>
            <person name="Nikolich-Zugich J."/>
            <person name="Slifka M.K."/>
            <person name="Messaoudi I."/>
        </authorList>
    </citation>
    <scope>REVIEW ON T CELL REPERTOIRE DIVERSITY</scope>
</reference>
<reference key="4">
    <citation type="journal article" date="2010" name="Cold Spring Harb. Perspect. Biol.">
        <title>Structural biology of the T-cell receptor: insights into receptor assembly, ligand recognition, and initiation of signaling.</title>
        <authorList>
            <person name="Wucherpfennig K.W."/>
            <person name="Gagnon E."/>
            <person name="Call M.J."/>
            <person name="Huseby E.S."/>
            <person name="Call M.E."/>
        </authorList>
    </citation>
    <scope>REVIEW ON T CELL RECEPTOR-CD3 COMPLEX ASSEMBLY</scope>
    <scope>SUBCELLULAR LOCATION</scope>
</reference>
<reference key="5">
    <citation type="journal article" date="2013" name="Nat. Rev. Immunol.">
        <title>T cell receptor signalling networks: branched, diversified and bounded.</title>
        <authorList>
            <person name="Brownlie R.J."/>
            <person name="Zamoyska R."/>
        </authorList>
    </citation>
    <scope>REVIEW ON T CELL RECEPTOR SIGNALING</scope>
</reference>
<reference key="6">
    <citation type="journal article" date="2014" name="Front. Immunol.">
        <title>Immunoglobulin and T Cell Receptor Genes: IMGT((R)) and the Birth and Rise of Immunoinformatics.</title>
        <authorList>
            <person name="Lefranc M.P."/>
        </authorList>
    </citation>
    <scope>NOMENCLATURE</scope>
</reference>
<reference key="7">
    <citation type="journal article" date="2015" name="Annu. Rev. Immunol.">
        <title>T cell antigen receptor recognition of antigen-presenting molecules.</title>
        <authorList>
            <person name="Rossjohn J."/>
            <person name="Gras S."/>
            <person name="Miles J.J."/>
            <person name="Turner S.J."/>
            <person name="Godfrey D.I."/>
            <person name="McCluskey J."/>
        </authorList>
    </citation>
    <scope>REVIEW ON FUNCTION</scope>
</reference>
<sequence>MLCSLLALLLGTFFGVRSQTIHQWPATLVQPVGSPLSLECTVEGTSNPNLYWYRQAAGRGLQLLFYSVGIGQISSEVPQNLSASRPQDRQFILSSKKLLLSDSGFYLCAWS</sequence>
<proteinExistence type="inferred from homology"/>
<accession>A0A0K0K1B3</accession>
<accession>A0A075B6Q1</accession>
<accession>A0A0A6YYU8</accession>
<accession>A0A5C0</accession>
<protein>
    <recommendedName>
        <fullName evidence="9">T cell receptor beta variable 30</fullName>
    </recommendedName>
</protein>
<name>TVB30_HUMAN</name>
<organism>
    <name type="scientific">Homo sapiens</name>
    <name type="common">Human</name>
    <dbReference type="NCBI Taxonomy" id="9606"/>
    <lineage>
        <taxon>Eukaryota</taxon>
        <taxon>Metazoa</taxon>
        <taxon>Chordata</taxon>
        <taxon>Craniata</taxon>
        <taxon>Vertebrata</taxon>
        <taxon>Euteleostomi</taxon>
        <taxon>Mammalia</taxon>
        <taxon>Eutheria</taxon>
        <taxon>Euarchontoglires</taxon>
        <taxon>Primates</taxon>
        <taxon>Haplorrhini</taxon>
        <taxon>Catarrhini</taxon>
        <taxon>Hominidae</taxon>
        <taxon>Homo</taxon>
    </lineage>
</organism>